<evidence type="ECO:0000250" key="1"/>
<evidence type="ECO:0000255" key="2"/>
<evidence type="ECO:0000305" key="3"/>
<organism>
    <name type="scientific">Candida albicans (strain SC5314 / ATCC MYA-2876)</name>
    <name type="common">Yeast</name>
    <dbReference type="NCBI Taxonomy" id="237561"/>
    <lineage>
        <taxon>Eukaryota</taxon>
        <taxon>Fungi</taxon>
        <taxon>Dikarya</taxon>
        <taxon>Ascomycota</taxon>
        <taxon>Saccharomycotina</taxon>
        <taxon>Pichiomycetes</taxon>
        <taxon>Debaryomycetaceae</taxon>
        <taxon>Candida/Lodderomyces clade</taxon>
        <taxon>Candida</taxon>
    </lineage>
</organism>
<proteinExistence type="inferred from homology"/>
<dbReference type="EMBL" id="AP006852">
    <property type="protein sequence ID" value="BAE44543.1"/>
    <property type="status" value="ALT_INIT"/>
    <property type="molecule type" value="Genomic_DNA"/>
</dbReference>
<dbReference type="EMBL" id="CP017629">
    <property type="protein sequence ID" value="AOW30391.1"/>
    <property type="molecule type" value="Genomic_DNA"/>
</dbReference>
<dbReference type="RefSeq" id="XP_720402.2">
    <property type="nucleotide sequence ID" value="XM_715309.2"/>
</dbReference>
<dbReference type="SMR" id="Q5AFF7"/>
<dbReference type="FunCoup" id="Q5AFF7">
    <property type="interactions" value="719"/>
</dbReference>
<dbReference type="STRING" id="237561.Q5AFF7"/>
<dbReference type="EnsemblFungi" id="C7_00120W_A-T">
    <property type="protein sequence ID" value="C7_00120W_A-T-p1"/>
    <property type="gene ID" value="C7_00120W_A"/>
</dbReference>
<dbReference type="GeneID" id="3637976"/>
<dbReference type="KEGG" id="cal:CAALFM_C700120WA"/>
<dbReference type="CGD" id="CAL0000185855">
    <property type="gene designation" value="orf19.7111"/>
</dbReference>
<dbReference type="VEuPathDB" id="FungiDB:C7_00120W_A"/>
<dbReference type="eggNOG" id="KOG3364">
    <property type="taxonomic scope" value="Eukaryota"/>
</dbReference>
<dbReference type="HOGENOM" id="CLU_104368_2_0_1"/>
<dbReference type="InParanoid" id="Q5AFF7"/>
<dbReference type="OMA" id="QFNYAWG"/>
<dbReference type="OrthoDB" id="421154at2759"/>
<dbReference type="Proteomes" id="UP000000559">
    <property type="component" value="Chromosome 7"/>
</dbReference>
<dbReference type="GO" id="GO:0005741">
    <property type="term" value="C:mitochondrial outer membrane"/>
    <property type="evidence" value="ECO:0000318"/>
    <property type="project" value="GO_Central"/>
</dbReference>
<dbReference type="GO" id="GO:0005778">
    <property type="term" value="C:peroxisomal membrane"/>
    <property type="evidence" value="ECO:0000318"/>
    <property type="project" value="GO_Central"/>
</dbReference>
<dbReference type="GO" id="GO:0008289">
    <property type="term" value="F:lipid binding"/>
    <property type="evidence" value="ECO:0000318"/>
    <property type="project" value="GO_Central"/>
</dbReference>
<dbReference type="GO" id="GO:0060090">
    <property type="term" value="F:molecular adaptor activity"/>
    <property type="evidence" value="ECO:0000318"/>
    <property type="project" value="GO_Central"/>
</dbReference>
<dbReference type="GO" id="GO:0000266">
    <property type="term" value="P:mitochondrial fission"/>
    <property type="evidence" value="ECO:0000318"/>
    <property type="project" value="GO_Central"/>
</dbReference>
<dbReference type="GO" id="GO:0016559">
    <property type="term" value="P:peroxisome fission"/>
    <property type="evidence" value="ECO:0000318"/>
    <property type="project" value="GO_Central"/>
</dbReference>
<dbReference type="CDD" id="cd12212">
    <property type="entry name" value="Fis1"/>
    <property type="match status" value="1"/>
</dbReference>
<dbReference type="FunFam" id="1.25.40.10:FF:000481">
    <property type="entry name" value="Mitochondrial fission 1 protein"/>
    <property type="match status" value="1"/>
</dbReference>
<dbReference type="Gene3D" id="1.25.40.10">
    <property type="entry name" value="Tetratricopeptide repeat domain"/>
    <property type="match status" value="1"/>
</dbReference>
<dbReference type="InterPro" id="IPR016543">
    <property type="entry name" value="Fis1"/>
</dbReference>
<dbReference type="InterPro" id="IPR033745">
    <property type="entry name" value="Fis1_cytosol"/>
</dbReference>
<dbReference type="InterPro" id="IPR028061">
    <property type="entry name" value="Fis1_TPR_C"/>
</dbReference>
<dbReference type="InterPro" id="IPR028058">
    <property type="entry name" value="Fis1_TPR_N"/>
</dbReference>
<dbReference type="InterPro" id="IPR011990">
    <property type="entry name" value="TPR-like_helical_dom_sf"/>
</dbReference>
<dbReference type="InterPro" id="IPR019734">
    <property type="entry name" value="TPR_rpt"/>
</dbReference>
<dbReference type="PANTHER" id="PTHR13247:SF0">
    <property type="entry name" value="MITOCHONDRIAL FISSION 1 PROTEIN"/>
    <property type="match status" value="1"/>
</dbReference>
<dbReference type="PANTHER" id="PTHR13247">
    <property type="entry name" value="TETRATRICOPEPTIDE REPEAT PROTEIN 11 TPR REPEAT PROTEIN 11"/>
    <property type="match status" value="1"/>
</dbReference>
<dbReference type="Pfam" id="PF14853">
    <property type="entry name" value="Fis1_TPR_C"/>
    <property type="match status" value="1"/>
</dbReference>
<dbReference type="Pfam" id="PF14852">
    <property type="entry name" value="Fis1_TPR_N"/>
    <property type="match status" value="1"/>
</dbReference>
<dbReference type="PIRSF" id="PIRSF008835">
    <property type="entry name" value="TPR_repeat_11_Fis1"/>
    <property type="match status" value="1"/>
</dbReference>
<dbReference type="SUPFAM" id="SSF48452">
    <property type="entry name" value="TPR-like"/>
    <property type="match status" value="1"/>
</dbReference>
<dbReference type="PROSITE" id="PS50005">
    <property type="entry name" value="TPR"/>
    <property type="match status" value="1"/>
</dbReference>
<dbReference type="PROSITE" id="PS50293">
    <property type="entry name" value="TPR_REGION"/>
    <property type="match status" value="1"/>
</dbReference>
<accession>Q5AFF7</accession>
<accession>A0A1D8PQH6</accession>
<accession>Q3MPW7</accession>
<protein>
    <recommendedName>
        <fullName>Mitochondrial fission 1 protein</fullName>
    </recommendedName>
</protein>
<feature type="chain" id="PRO_0000256180" description="Mitochondrial fission 1 protein">
    <location>
        <begin position="1"/>
        <end position="154"/>
    </location>
</feature>
<feature type="topological domain" description="Cytoplasmic" evidence="2">
    <location>
        <begin position="1"/>
        <end position="128"/>
    </location>
</feature>
<feature type="transmembrane region" description="Helical" evidence="2">
    <location>
        <begin position="129"/>
        <end position="149"/>
    </location>
</feature>
<feature type="topological domain" description="Mitochondrial intermembrane" evidence="2">
    <location>
        <begin position="150"/>
        <end position="154"/>
    </location>
</feature>
<feature type="repeat" description="TPR">
    <location>
        <begin position="76"/>
        <end position="109"/>
    </location>
</feature>
<keyword id="KW-0472">Membrane</keyword>
<keyword id="KW-0496">Mitochondrion</keyword>
<keyword id="KW-1000">Mitochondrion outer membrane</keyword>
<keyword id="KW-1185">Reference proteome</keyword>
<keyword id="KW-0677">Repeat</keyword>
<keyword id="KW-0802">TPR repeat</keyword>
<keyword id="KW-0812">Transmembrane</keyword>
<keyword id="KW-1133">Transmembrane helix</keyword>
<gene>
    <name type="primary">FIS1</name>
    <name type="ordered locus">CAALFM_C700120WA</name>
    <name type="ORF">CaJ7.0019</name>
    <name type="ORF">CaO19.7111</name>
</gene>
<comment type="function">
    <text evidence="1">Has a role in mitochondrial fission. Has a role in outer membrane fission but not matrix separation (By similarity).</text>
</comment>
<comment type="subcellular location">
    <subcellularLocation>
        <location evidence="1">Mitochondrion outer membrane</location>
        <topology evidence="1">Single-pass membrane protein</topology>
    </subcellularLocation>
</comment>
<comment type="domain">
    <text evidence="1">The C-terminus is required for mitochondrial localization, while the N-terminus is necessary for mitochondrial fission.</text>
</comment>
<comment type="similarity">
    <text evidence="3">Belongs to the FIS1 family.</text>
</comment>
<comment type="sequence caution" evidence="3">
    <conflict type="erroneous initiation">
        <sequence resource="EMBL-CDS" id="BAE44543"/>
    </conflict>
</comment>
<name>FIS1_CANAL</name>
<reference key="1">
    <citation type="journal article" date="2005" name="Genetics">
        <title>Sequence finishing and gene mapping for Candida albicans chromosome 7 and syntenic analysis against the Saccharomyces cerevisiae genome.</title>
        <authorList>
            <person name="Chibana H."/>
            <person name="Oka N."/>
            <person name="Nakayama H."/>
            <person name="Aoyama T."/>
            <person name="Magee B.B."/>
            <person name="Magee P.T."/>
            <person name="Mikami Y."/>
        </authorList>
    </citation>
    <scope>NUCLEOTIDE SEQUENCE [LARGE SCALE GENOMIC DNA]</scope>
    <source>
        <strain>SC5314 / ATCC MYA-2876</strain>
    </source>
</reference>
<reference key="2">
    <citation type="journal article" date="2004" name="Proc. Natl. Acad. Sci. U.S.A.">
        <title>The diploid genome sequence of Candida albicans.</title>
        <authorList>
            <person name="Jones T."/>
            <person name="Federspiel N.A."/>
            <person name="Chibana H."/>
            <person name="Dungan J."/>
            <person name="Kalman S."/>
            <person name="Magee B.B."/>
            <person name="Newport G."/>
            <person name="Thorstenson Y.R."/>
            <person name="Agabian N."/>
            <person name="Magee P.T."/>
            <person name="Davis R.W."/>
            <person name="Scherer S."/>
        </authorList>
    </citation>
    <scope>NUCLEOTIDE SEQUENCE [LARGE SCALE GENOMIC DNA]</scope>
    <source>
        <strain>SC5314 / ATCC MYA-2876</strain>
    </source>
</reference>
<reference key="3">
    <citation type="journal article" date="2007" name="Genome Biol.">
        <title>Assembly of the Candida albicans genome into sixteen supercontigs aligned on the eight chromosomes.</title>
        <authorList>
            <person name="van het Hoog M."/>
            <person name="Rast T.J."/>
            <person name="Martchenko M."/>
            <person name="Grindle S."/>
            <person name="Dignard D."/>
            <person name="Hogues H."/>
            <person name="Cuomo C."/>
            <person name="Berriman M."/>
            <person name="Scherer S."/>
            <person name="Magee B.B."/>
            <person name="Whiteway M."/>
            <person name="Chibana H."/>
            <person name="Nantel A."/>
            <person name="Magee P.T."/>
        </authorList>
    </citation>
    <scope>GENOME REANNOTATION</scope>
    <source>
        <strain>SC5314 / ATCC MYA-2876</strain>
    </source>
</reference>
<reference key="4">
    <citation type="journal article" date="2013" name="Genome Biol.">
        <title>Assembly of a phased diploid Candida albicans genome facilitates allele-specific measurements and provides a simple model for repeat and indel structure.</title>
        <authorList>
            <person name="Muzzey D."/>
            <person name="Schwartz K."/>
            <person name="Weissman J.S."/>
            <person name="Sherlock G."/>
        </authorList>
    </citation>
    <scope>NUCLEOTIDE SEQUENCE [LARGE SCALE GENOMIC DNA]</scope>
    <scope>GENOME REANNOTATION</scope>
    <source>
        <strain>SC5314 / ATCC MYA-2876</strain>
    </source>
</reference>
<sequence>MFEKAVYPALEELQQPLSQEQFRILKDQLNSEEPTPSAQTKFNYAWGLIKSNHHKQQEYGVQILTELYKSEKSMRREVLYYLSLGSLKIGDYTNAKRYVEALLEIEPENQQARGLLKTIDDKITTEGLIGIGIAGGALAVGLGLIGALVRKNRK</sequence>